<protein>
    <recommendedName>
        <fullName>Leucine aminopeptidase 2</fullName>
        <ecNumber>3.4.11.-</ecNumber>
    </recommendedName>
    <alternativeName>
        <fullName>Epoxide hydrolase</fullName>
        <ecNumber>3.3.2.10</ecNumber>
    </alternativeName>
    <alternativeName>
        <fullName>Leukotriene A-4 hydrolase homolog</fullName>
        <shortName>LTA-4 hydrolase</shortName>
    </alternativeName>
</protein>
<keyword id="KW-0963">Cytoplasm</keyword>
<keyword id="KW-0378">Hydrolase</keyword>
<keyword id="KW-0479">Metal-binding</keyword>
<keyword id="KW-0482">Metalloprotease</keyword>
<keyword id="KW-0539">Nucleus</keyword>
<keyword id="KW-0645">Protease</keyword>
<keyword id="KW-1185">Reference proteome</keyword>
<keyword id="KW-0862">Zinc</keyword>
<comment type="function">
    <text evidence="2">Aminopeptidase that preferentially cleaves di- and tripeptides. Also has low epoxide hydrolase activity (in vitro). Can hydrolyze the epoxide leukotriene LTA(4) but it forms preferentially 5,6-dihydroxy-7,9,11,14-eicosatetraenoic acid rather than the cytokine leukotriene B(4) as the product compared to the homologous mammalian enzyme (in vitro).</text>
</comment>
<comment type="catalytic activity">
    <reaction evidence="2">
        <text>an epoxide + H2O = an ethanediol</text>
        <dbReference type="Rhea" id="RHEA:19037"/>
        <dbReference type="ChEBI" id="CHEBI:15377"/>
        <dbReference type="ChEBI" id="CHEBI:32955"/>
        <dbReference type="ChEBI" id="CHEBI:140594"/>
        <dbReference type="EC" id="3.3.2.10"/>
    </reaction>
</comment>
<comment type="cofactor">
    <cofactor evidence="2">
        <name>Zn(2+)</name>
        <dbReference type="ChEBI" id="CHEBI:29105"/>
    </cofactor>
    <text evidence="2">Binds 1 zinc ion per subunit.</text>
</comment>
<comment type="subcellular location">
    <subcellularLocation>
        <location evidence="2">Cytoplasm</location>
    </subcellularLocation>
    <subcellularLocation>
        <location evidence="2">Nucleus</location>
    </subcellularLocation>
</comment>
<comment type="similarity">
    <text evidence="4">Belongs to the peptidase M1 family.</text>
</comment>
<comment type="sequence caution" evidence="4">
    <conflict type="erroneous initiation">
        <sequence resource="EMBL-CDS" id="EHA52461"/>
    </conflict>
    <text>Extended N-terminus.</text>
</comment>
<evidence type="ECO:0000250" key="1">
    <source>
        <dbReference type="UniProtKB" id="P09960"/>
    </source>
</evidence>
<evidence type="ECO:0000250" key="2">
    <source>
        <dbReference type="UniProtKB" id="Q10740"/>
    </source>
</evidence>
<evidence type="ECO:0000255" key="3">
    <source>
        <dbReference type="PROSITE-ProRule" id="PRU10095"/>
    </source>
</evidence>
<evidence type="ECO:0000305" key="4"/>
<gene>
    <name type="ORF">MGG_09481</name>
</gene>
<proteinExistence type="inferred from homology"/>
<name>LKHA4_PYRO7</name>
<organism>
    <name type="scientific">Pyricularia oryzae (strain 70-15 / ATCC MYA-4617 / FGSC 8958)</name>
    <name type="common">Rice blast fungus</name>
    <name type="synonym">Magnaporthe oryzae</name>
    <dbReference type="NCBI Taxonomy" id="242507"/>
    <lineage>
        <taxon>Eukaryota</taxon>
        <taxon>Fungi</taxon>
        <taxon>Dikarya</taxon>
        <taxon>Ascomycota</taxon>
        <taxon>Pezizomycotina</taxon>
        <taxon>Sordariomycetes</taxon>
        <taxon>Sordariomycetidae</taxon>
        <taxon>Magnaporthales</taxon>
        <taxon>Pyriculariaceae</taxon>
        <taxon>Pyricularia</taxon>
    </lineage>
</organism>
<reference key="1">
    <citation type="journal article" date="2005" name="Nature">
        <title>The genome sequence of the rice blast fungus Magnaporthe grisea.</title>
        <authorList>
            <person name="Dean R.A."/>
            <person name="Talbot N.J."/>
            <person name="Ebbole D.J."/>
            <person name="Farman M.L."/>
            <person name="Mitchell T.K."/>
            <person name="Orbach M.J."/>
            <person name="Thon M.R."/>
            <person name="Kulkarni R."/>
            <person name="Xu J.-R."/>
            <person name="Pan H."/>
            <person name="Read N.D."/>
            <person name="Lee Y.-H."/>
            <person name="Carbone I."/>
            <person name="Brown D."/>
            <person name="Oh Y.Y."/>
            <person name="Donofrio N."/>
            <person name="Jeong J.S."/>
            <person name="Soanes D.M."/>
            <person name="Djonovic S."/>
            <person name="Kolomiets E."/>
            <person name="Rehmeyer C."/>
            <person name="Li W."/>
            <person name="Harding M."/>
            <person name="Kim S."/>
            <person name="Lebrun M.-H."/>
            <person name="Bohnert H."/>
            <person name="Coughlan S."/>
            <person name="Butler J."/>
            <person name="Calvo S.E."/>
            <person name="Ma L.-J."/>
            <person name="Nicol R."/>
            <person name="Purcell S."/>
            <person name="Nusbaum C."/>
            <person name="Galagan J.E."/>
            <person name="Birren B.W."/>
        </authorList>
    </citation>
    <scope>NUCLEOTIDE SEQUENCE [LARGE SCALE GENOMIC DNA]</scope>
    <source>
        <strain>70-15 / ATCC MYA-4617 / FGSC 8958</strain>
    </source>
</reference>
<sequence length="613" mass="69113">MAARDPSTASNYDAWKTKHTTANLRIDFDDKCLRGSVVLELESRTAKESKEIVLDSSYVSVESIKLNDVQTKWEIKERNGPMGSPLHISVPEGADSGEVVRLEMAVKTTPQCTALQWLTPAQTSNKKAPFMFSQAQACHARSLFPCQDTPDVKSTYSFNITSPHVVVASGVANDGDKAEADGGDKVYKYEQNVPIPSYLFALASGDIAMAPIGPRSSVATGPDEVKECQWELEEDMGKFMDAAERLVFPYKWGEYNVLVLPPSFPYGGMENPIYTFATPTIISGDRQNTDVIAHELSHSWSGNLVTSCSWEHYWLNEGWTMYLERRIIAAVRGPAYFDFSALLGWKHLEDAIEEFGADHKFTQLCINHKGIDPDDAFSTVPYEKGFHMVYYLDRLVGRKNFDKFIPYYFTKWANKSLDSYEFKDTFLEFFDKPEYADLKDKIAGIDWEGRFYTPGLPPKPEFDTSLVDVCYALADKWKKGDYTPSSKDVDGWTGNQKLVFLGSVQDFEQPLSAEQAKQLGNAYDLIETKNVELKTAYYLIALRAQDSTAYQGVADLLGQVGRMKFVRPLFRALNKVDRPLALTTFEKNKDFYHPICRAMAEKDLGLSDDAKKE</sequence>
<feature type="chain" id="PRO_0000324932" description="Leucine aminopeptidase 2">
    <location>
        <begin position="1"/>
        <end position="613"/>
    </location>
</feature>
<feature type="active site" description="Proton acceptor" evidence="3">
    <location>
        <position position="295"/>
    </location>
</feature>
<feature type="active site" description="Proton donor" evidence="3">
    <location>
        <position position="382"/>
    </location>
</feature>
<feature type="binding site" evidence="1">
    <location>
        <begin position="134"/>
        <end position="136"/>
    </location>
    <ligand>
        <name>a peptide</name>
        <dbReference type="ChEBI" id="CHEBI:60466"/>
    </ligand>
</feature>
<feature type="binding site" evidence="1">
    <location>
        <begin position="265"/>
        <end position="270"/>
    </location>
    <ligand>
        <name>a peptide</name>
        <dbReference type="ChEBI" id="CHEBI:60466"/>
    </ligand>
</feature>
<feature type="binding site" evidence="3">
    <location>
        <position position="294"/>
    </location>
    <ligand>
        <name>Zn(2+)</name>
        <dbReference type="ChEBI" id="CHEBI:29105"/>
        <note>catalytic</note>
    </ligand>
</feature>
<feature type="binding site" evidence="3">
    <location>
        <position position="298"/>
    </location>
    <ligand>
        <name>Zn(2+)</name>
        <dbReference type="ChEBI" id="CHEBI:29105"/>
        <note>catalytic</note>
    </ligand>
</feature>
<feature type="binding site" evidence="3">
    <location>
        <position position="317"/>
    </location>
    <ligand>
        <name>Zn(2+)</name>
        <dbReference type="ChEBI" id="CHEBI:29105"/>
        <note>catalytic</note>
    </ligand>
</feature>
<dbReference type="EC" id="3.4.11.-"/>
<dbReference type="EC" id="3.3.2.10"/>
<dbReference type="EMBL" id="CM001233">
    <property type="protein sequence ID" value="EHA52461.1"/>
    <property type="status" value="ALT_INIT"/>
    <property type="molecule type" value="Genomic_DNA"/>
</dbReference>
<dbReference type="RefSeq" id="XP_003712268.1">
    <property type="nucleotide sequence ID" value="XM_003712220.1"/>
</dbReference>
<dbReference type="SMR" id="A4QUC1"/>
<dbReference type="FunCoup" id="A4QUC1">
    <property type="interactions" value="1031"/>
</dbReference>
<dbReference type="STRING" id="242507.A4QUC1"/>
<dbReference type="MEROPS" id="M01.034"/>
<dbReference type="GeneID" id="2680552"/>
<dbReference type="KEGG" id="mgr:MGG_09481"/>
<dbReference type="eggNOG" id="KOG1047">
    <property type="taxonomic scope" value="Eukaryota"/>
</dbReference>
<dbReference type="InParanoid" id="A4QUC1"/>
<dbReference type="OrthoDB" id="79562at2759"/>
<dbReference type="Proteomes" id="UP000009058">
    <property type="component" value="Chromosome 3"/>
</dbReference>
<dbReference type="GO" id="GO:0005829">
    <property type="term" value="C:cytosol"/>
    <property type="evidence" value="ECO:0007669"/>
    <property type="project" value="TreeGrafter"/>
</dbReference>
<dbReference type="GO" id="GO:0005634">
    <property type="term" value="C:nucleus"/>
    <property type="evidence" value="ECO:0007669"/>
    <property type="project" value="UniProtKB-SubCell"/>
</dbReference>
<dbReference type="GO" id="GO:0004177">
    <property type="term" value="F:aminopeptidase activity"/>
    <property type="evidence" value="ECO:0000250"/>
    <property type="project" value="UniProtKB"/>
</dbReference>
<dbReference type="GO" id="GO:0004301">
    <property type="term" value="F:epoxide hydrolase activity"/>
    <property type="evidence" value="ECO:0000250"/>
    <property type="project" value="UniProtKB"/>
</dbReference>
<dbReference type="GO" id="GO:0008237">
    <property type="term" value="F:metallopeptidase activity"/>
    <property type="evidence" value="ECO:0007669"/>
    <property type="project" value="UniProtKB-KW"/>
</dbReference>
<dbReference type="GO" id="GO:0008270">
    <property type="term" value="F:zinc ion binding"/>
    <property type="evidence" value="ECO:0000250"/>
    <property type="project" value="UniProtKB"/>
</dbReference>
<dbReference type="GO" id="GO:0043171">
    <property type="term" value="P:peptide catabolic process"/>
    <property type="evidence" value="ECO:0000250"/>
    <property type="project" value="UniProtKB"/>
</dbReference>
<dbReference type="GO" id="GO:0006508">
    <property type="term" value="P:proteolysis"/>
    <property type="evidence" value="ECO:0007669"/>
    <property type="project" value="UniProtKB-KW"/>
</dbReference>
<dbReference type="CDD" id="cd09599">
    <property type="entry name" value="M1_LTA4H"/>
    <property type="match status" value="1"/>
</dbReference>
<dbReference type="FunFam" id="1.10.390.10:FF:000009">
    <property type="entry name" value="Leukotriene A(4) hydrolase"/>
    <property type="match status" value="1"/>
</dbReference>
<dbReference type="FunFam" id="1.25.40.320:FF:000001">
    <property type="entry name" value="Leukotriene A(4) hydrolase"/>
    <property type="match status" value="1"/>
</dbReference>
<dbReference type="FunFam" id="2.60.40.1730:FF:000004">
    <property type="entry name" value="Leukotriene A(4) hydrolase"/>
    <property type="match status" value="1"/>
</dbReference>
<dbReference type="FunFam" id="3.30.2010.30:FF:000001">
    <property type="entry name" value="Leukotriene A(4) hydrolase"/>
    <property type="match status" value="1"/>
</dbReference>
<dbReference type="Gene3D" id="3.30.2010.30">
    <property type="match status" value="1"/>
</dbReference>
<dbReference type="Gene3D" id="1.10.390.10">
    <property type="entry name" value="Neutral Protease Domain 2"/>
    <property type="match status" value="1"/>
</dbReference>
<dbReference type="Gene3D" id="1.25.40.320">
    <property type="entry name" value="Peptidase M1, leukotriene A4 hydrolase/aminopeptidase C-terminal domain"/>
    <property type="match status" value="1"/>
</dbReference>
<dbReference type="Gene3D" id="2.60.40.1730">
    <property type="entry name" value="tricorn interacting facor f3 domain"/>
    <property type="match status" value="1"/>
</dbReference>
<dbReference type="InterPro" id="IPR045357">
    <property type="entry name" value="Aminopeptidase_N-like_N"/>
</dbReference>
<dbReference type="InterPro" id="IPR042097">
    <property type="entry name" value="Aminopeptidase_N-like_N_sf"/>
</dbReference>
<dbReference type="InterPro" id="IPR016024">
    <property type="entry name" value="ARM-type_fold"/>
</dbReference>
<dbReference type="InterPro" id="IPR049980">
    <property type="entry name" value="LTA4H_cat"/>
</dbReference>
<dbReference type="InterPro" id="IPR038502">
    <property type="entry name" value="M1_LTA-4_hydro/amino_C_sf"/>
</dbReference>
<dbReference type="InterPro" id="IPR034015">
    <property type="entry name" value="M1_LTA4H"/>
</dbReference>
<dbReference type="InterPro" id="IPR001930">
    <property type="entry name" value="Peptidase_M1"/>
</dbReference>
<dbReference type="InterPro" id="IPR015211">
    <property type="entry name" value="Peptidase_M1_C"/>
</dbReference>
<dbReference type="InterPro" id="IPR014782">
    <property type="entry name" value="Peptidase_M1_dom"/>
</dbReference>
<dbReference type="InterPro" id="IPR027268">
    <property type="entry name" value="Peptidase_M4/M1_CTD_sf"/>
</dbReference>
<dbReference type="PANTHER" id="PTHR45726">
    <property type="entry name" value="LEUKOTRIENE A-4 HYDROLASE"/>
    <property type="match status" value="1"/>
</dbReference>
<dbReference type="PANTHER" id="PTHR45726:SF3">
    <property type="entry name" value="LEUKOTRIENE A-4 HYDROLASE"/>
    <property type="match status" value="1"/>
</dbReference>
<dbReference type="Pfam" id="PF09127">
    <property type="entry name" value="Leuk-A4-hydro_C"/>
    <property type="match status" value="1"/>
</dbReference>
<dbReference type="Pfam" id="PF01433">
    <property type="entry name" value="Peptidase_M1"/>
    <property type="match status" value="1"/>
</dbReference>
<dbReference type="Pfam" id="PF17900">
    <property type="entry name" value="Peptidase_M1_N"/>
    <property type="match status" value="1"/>
</dbReference>
<dbReference type="PRINTS" id="PR00756">
    <property type="entry name" value="ALADIPTASE"/>
</dbReference>
<dbReference type="SMART" id="SM01263">
    <property type="entry name" value="Leuk-A4-hydro_C"/>
    <property type="match status" value="1"/>
</dbReference>
<dbReference type="SUPFAM" id="SSF48371">
    <property type="entry name" value="ARM repeat"/>
    <property type="match status" value="1"/>
</dbReference>
<dbReference type="SUPFAM" id="SSF63737">
    <property type="entry name" value="Leukotriene A4 hydrolase N-terminal domain"/>
    <property type="match status" value="1"/>
</dbReference>
<dbReference type="SUPFAM" id="SSF55486">
    <property type="entry name" value="Metalloproteases ('zincins'), catalytic domain"/>
    <property type="match status" value="1"/>
</dbReference>
<dbReference type="PROSITE" id="PS00142">
    <property type="entry name" value="ZINC_PROTEASE"/>
    <property type="match status" value="1"/>
</dbReference>
<accession>A4QUC1</accession>
<accession>G4N1U6</accession>